<gene>
    <name type="primary">PMEL</name>
    <name type="synonym">D12S53E</name>
    <name type="synonym">PMEL17</name>
    <name type="synonym">SILV</name>
</gene>
<feature type="signal peptide" evidence="22">
    <location>
        <begin position="1"/>
        <end position="24"/>
    </location>
</feature>
<feature type="chain" id="PRO_0000024712" description="Melanocyte protein PMEL">
    <location>
        <begin position="25"/>
        <end position="661"/>
    </location>
</feature>
<feature type="chain" id="PRO_0000292263" description="M-alpha">
    <location>
        <begin position="25"/>
        <end position="467"/>
    </location>
</feature>
<feature type="chain" id="PRO_0000386648" description="M-beta">
    <location>
        <begin position="470"/>
        <end position="661"/>
    </location>
</feature>
<feature type="topological domain" description="Lumenal" evidence="25">
    <location>
        <begin position="470"/>
        <end position="595"/>
    </location>
</feature>
<feature type="transmembrane region" description="Helical" evidence="1">
    <location>
        <begin position="596"/>
        <end position="616"/>
    </location>
</feature>
<feature type="topological domain" description="Cytoplasmic" evidence="25">
    <location>
        <begin position="617"/>
        <end position="661"/>
    </location>
</feature>
<feature type="domain" description="PKD" evidence="2">
    <location>
        <begin position="255"/>
        <end position="292"/>
    </location>
</feature>
<feature type="repeat" description="1" evidence="1">
    <location>
        <begin position="302"/>
        <end position="314"/>
    </location>
</feature>
<feature type="repeat" description="2" evidence="1">
    <location>
        <begin position="315"/>
        <end position="327"/>
    </location>
</feature>
<feature type="repeat" description="3" evidence="1">
    <location>
        <begin position="328"/>
        <end position="340"/>
    </location>
</feature>
<feature type="repeat" description="4" evidence="1">
    <location>
        <begin position="341"/>
        <end position="353"/>
    </location>
</feature>
<feature type="repeat" description="5" evidence="1">
    <location>
        <begin position="354"/>
        <end position="366"/>
    </location>
</feature>
<feature type="repeat" description="6" evidence="1">
    <location>
        <begin position="367"/>
        <end position="379"/>
    </location>
</feature>
<feature type="repeat" description="7" evidence="1">
    <location>
        <begin position="380"/>
        <end position="392"/>
    </location>
</feature>
<feature type="repeat" description="8" evidence="1">
    <location>
        <begin position="393"/>
        <end position="405"/>
    </location>
</feature>
<feature type="repeat" description="9" evidence="1">
    <location>
        <begin position="406"/>
        <end position="418"/>
    </location>
</feature>
<feature type="repeat" description="10" evidence="1">
    <location>
        <begin position="419"/>
        <end position="431"/>
    </location>
</feature>
<feature type="repeat" description="11" evidence="1">
    <location>
        <begin position="432"/>
        <end position="444"/>
    </location>
</feature>
<feature type="repeat" description="12" evidence="1">
    <location>
        <begin position="445"/>
        <end position="457"/>
    </location>
</feature>
<feature type="region of interest" description="Amyloidogenic unit" evidence="18">
    <location>
        <begin position="148"/>
        <end position="223"/>
    </location>
</feature>
<feature type="region of interest" description="Antigenic peptide; presented by A*02:01" evidence="20">
    <location>
        <begin position="154"/>
        <end position="162"/>
    </location>
</feature>
<feature type="region of interest" description="Antigenic peptide; presented by A*02:01" evidence="20">
    <location>
        <begin position="209"/>
        <end position="217"/>
    </location>
</feature>
<feature type="region of interest" description="Antigenic peptide; presented by A*02:01" evidence="20">
    <location>
        <begin position="280"/>
        <end position="288"/>
    </location>
</feature>
<feature type="region of interest" description="12 X 13 AA approximate tandem repeats, RPT domain" evidence="1 27">
    <location>
        <begin position="302"/>
        <end position="457"/>
    </location>
</feature>
<feature type="region of interest" description="Disordered" evidence="3">
    <location>
        <begin position="302"/>
        <end position="353"/>
    </location>
</feature>
<feature type="region of interest" description="Kringle-like fold" evidence="26">
    <location>
        <begin position="516"/>
        <end position="566"/>
    </location>
</feature>
<feature type="compositionally biased region" description="Low complexity" evidence="3">
    <location>
        <begin position="325"/>
        <end position="339"/>
    </location>
</feature>
<feature type="site" description="Essential for fibril formation" evidence="18">
    <location>
        <position position="151"/>
    </location>
</feature>
<feature type="site" description="Essential for fibril formation" evidence="18">
    <location>
        <position position="160"/>
    </location>
</feature>
<feature type="site" description="Cleavage; by furin-like proprotein convertase" evidence="6">
    <location>
        <begin position="469"/>
        <end position="470"/>
    </location>
</feature>
<feature type="site" description="Cleavage; by ADAM metalloproteinases" evidence="13">
    <location>
        <begin position="583"/>
        <end position="584"/>
    </location>
</feature>
<feature type="site" description="Endocytosis signal" evidence="10">
    <location>
        <begin position="655"/>
        <end position="656"/>
    </location>
</feature>
<feature type="site" description="ER exit signal" evidence="10">
    <location>
        <position position="661"/>
    </location>
</feature>
<feature type="glycosylation site" description="N-linked (GlcNAc...) asparagine" evidence="1">
    <location>
        <position position="81"/>
    </location>
</feature>
<feature type="glycosylation site" description="N-linked (GlcNAc...) asparagine" evidence="1">
    <location>
        <position position="106"/>
    </location>
</feature>
<feature type="glycosylation site" description="N-linked (GlcNAc...) asparagine" evidence="1">
    <location>
        <position position="111"/>
    </location>
</feature>
<feature type="glycosylation site" description="N-linked (GlcNAc...) asparagine" evidence="1">
    <location>
        <position position="321"/>
    </location>
</feature>
<feature type="glycosylation site" description="N-linked (GlcNAc...) asparagine" evidence="1">
    <location>
        <position position="568"/>
    </location>
</feature>
<feature type="disulfide bond" description="Interchain (in monomeric form)" evidence="26">
    <location>
        <begin position="301"/>
        <end status="unknown"/>
    </location>
</feature>
<feature type="disulfide bond" description="Intrachain (in dimeric form)" evidence="26">
    <location>
        <begin position="301"/>
        <end status="unknown"/>
    </location>
</feature>
<feature type="splice variant" id="VSP_038266" description="In isoform 3." evidence="23">
    <location>
        <begin position="26"/>
        <end position="111"/>
    </location>
</feature>
<feature type="splice variant" id="VSP_038267" description="In isoform 4 and isoform 5." evidence="25">
    <location>
        <begin position="373"/>
        <end position="414"/>
    </location>
</feature>
<feature type="splice variant" id="VSP_038268" description="In isoform 2 and isoform 5." evidence="24">
    <original>P</original>
    <variation>PVPGILLT</variation>
    <location>
        <position position="587"/>
    </location>
</feature>
<feature type="sequence variant" id="VAR_050606" description="In dbSNP:rs2071024.">
    <original>P</original>
    <variation>H</variation>
    <location>
        <position position="320"/>
    </location>
</feature>
<feature type="sequence variant" id="VAR_050607" description="In dbSNP:rs17118154.">
    <original>E</original>
    <variation>D</variation>
    <location>
        <position position="370"/>
    </location>
</feature>
<feature type="mutagenesis site" description="Does not affect dimer formation." evidence="17">
    <original>C</original>
    <variation>S</variation>
    <location>
        <position position="60"/>
    </location>
</feature>
<feature type="mutagenesis site" description="Does not affect dimer formation." evidence="17">
    <original>C</original>
    <variation>S</variation>
    <location>
        <position position="130"/>
    </location>
</feature>
<feature type="mutagenesis site" description="Does not affect dimer formation." evidence="17">
    <original>C</original>
    <variation>S</variation>
    <location>
        <position position="138"/>
    </location>
</feature>
<feature type="mutagenesis site" description="Loss-of-function. Retained in the endoplasmic reticulum likely due to misfolding." evidence="18">
    <original>F</original>
    <variation>A</variation>
    <location>
        <position position="149"/>
    </location>
</feature>
<feature type="mutagenesis site" description="Reduces fibril formation." evidence="18">
    <original>F</original>
    <variation>L</variation>
    <location>
        <position position="149"/>
    </location>
</feature>
<feature type="mutagenesis site" description="Loss-of-function. Abolishes fibril formation. Does not exert dominant negative effect; when associated with A-211." evidence="18">
    <original>Y</original>
    <variation>A</variation>
    <variation>L</variation>
    <location>
        <position position="151"/>
    </location>
</feature>
<feature type="mutagenesis site" description="Has normal fibril formation." evidence="18">
    <original>Y</original>
    <variation>F</variation>
    <location>
        <position position="151"/>
    </location>
</feature>
<feature type="mutagenesis site" description="Markedly reduces fibril formation." evidence="18">
    <original>V</original>
    <variation>A</variation>
    <location>
        <position position="152"/>
    </location>
</feature>
<feature type="mutagenesis site" description="Loss-of-function. Abolishes fibrillar amyloid formation. Does not exert dominant negative effect and retains the amyloidogenic potential; when associated with A-211." evidence="18">
    <original>W</original>
    <variation>A</variation>
    <variation>F</variation>
    <location>
        <position position="153"/>
    </location>
</feature>
<feature type="mutagenesis site" description="Reduces fibril formation." evidence="18">
    <original>K</original>
    <variation>A</variation>
    <location>
        <position position="154"/>
    </location>
</feature>
<feature type="mutagenesis site" description="Reduces fibril formation." evidence="18">
    <original>T</original>
    <variation>A</variation>
    <location>
        <position position="155"/>
    </location>
</feature>
<feature type="mutagenesis site" description="Reduces fibril formation." evidence="18">
    <original>W</original>
    <variation>A</variation>
    <location>
        <position position="156"/>
    </location>
</feature>
<feature type="mutagenesis site" description="Reduces fibril formation." evidence="18">
    <original>G</original>
    <variation>A</variation>
    <location>
        <position position="157"/>
    </location>
</feature>
<feature type="mutagenesis site" description="Reduces fibril formation." evidence="18">
    <original>Q</original>
    <variation>A</variation>
    <location>
        <position position="158"/>
    </location>
</feature>
<feature type="mutagenesis site" description="Reduces fibril formation." evidence="18">
    <original>Y</original>
    <variation>A</variation>
    <location>
        <position position="159"/>
    </location>
</feature>
<feature type="mutagenesis site" description="Loss-of-function. Abolishes fibril formation. Does not exert dominant negative effect; when associated with A-211." evidence="18">
    <original>W</original>
    <variation>A</variation>
    <variation>F</variation>
    <location>
        <position position="160"/>
    </location>
</feature>
<feature type="mutagenesis site" description="Reduces fibril formation." evidence="18">
    <original>Q</original>
    <variation>A</variation>
    <location>
        <position position="161"/>
    </location>
</feature>
<feature type="mutagenesis site" description="Reduces fibril formation." evidence="18">
    <original>V</original>
    <variation>A</variation>
    <location>
        <position position="162"/>
    </location>
</feature>
<feature type="mutagenesis site" description="Reduces fibril formation." evidence="18">
    <original>G</original>
    <variation>A</variation>
    <location>
        <position position="165"/>
    </location>
</feature>
<feature type="mutagenesis site" description="Loss-of-function. Abolishes fibrillar amyloid formation. Does not exert dominant negative effect and retains the amyloidogenic potential; when associated with A-211." evidence="18">
    <original>L</original>
    <variation>A</variation>
    <location>
        <position position="170"/>
    </location>
</feature>
<feature type="mutagenesis site" description="Loss-of-function. Likely misfolded and rapidly degraded." evidence="18">
    <original>I</original>
    <variation>A</variation>
    <location>
        <position position="172"/>
    </location>
</feature>
<feature type="mutagenesis site" description="Markedly reduces fibril formation. Does not exert dominant negative effect; when associated with A-211." evidence="18">
    <original>T</original>
    <variation>A</variation>
    <location>
        <position position="174"/>
    </location>
</feature>
<feature type="mutagenesis site" description="Reduces fibril formation." evidence="18">
    <original>G</original>
    <variation>A</variation>
    <location>
        <position position="180"/>
    </location>
</feature>
<feature type="mutagenesis site" description="Loss-of-function. Abolishes fibrillar amyloid formation. Does not exert dominant negative effect and retains the amyloidogenic potential; when associated with A-211." evidence="18">
    <original>Y</original>
    <variation>A</variation>
    <variation>L</variation>
    <location>
        <position position="189"/>
    </location>
</feature>
<feature type="mutagenesis site" description="Has normal fibril formation." evidence="18">
    <original>Y</original>
    <variation>F</variation>
    <location>
        <position position="189"/>
    </location>
</feature>
<feature type="mutagenesis site" description="Reduces fibril formation." evidence="18">
    <original>R</original>
    <variation>A</variation>
    <location>
        <position position="191"/>
    </location>
</feature>
<feature type="mutagenesis site" description="Reduces fibril formation." evidence="18">
    <original>R</original>
    <variation>A</variation>
    <location>
        <position position="192"/>
    </location>
</feature>
<feature type="mutagenesis site" description="Reduces fibril formation." evidence="18">
    <original>L</original>
    <variation>A</variation>
    <location>
        <position position="200"/>
    </location>
</feature>
<feature type="mutagenesis site" description="Loss-of-function. Abolishes fibrillar amyloid formation. Does not exert dominant negative effect and retains the amyloidogenic potential; when associated with A-211." evidence="18">
    <original>F</original>
    <variation>A</variation>
    <location>
        <position position="207"/>
    </location>
</feature>
<feature type="mutagenesis site" description="Has normal fibril formation. Reduces fibril formation; when associated with L-215." evidence="18">
    <original>F</original>
    <variation>L</variation>
    <location>
        <position position="207"/>
    </location>
</feature>
<feature type="mutagenesis site" description="Loss-of-function. Abolishes fibrillar amyloid formation. Does not exert dominant negative effect and retains the amyloidogenic potential; when associated with A-211." evidence="18">
    <original>I</original>
    <variation>A</variation>
    <location>
        <position position="209"/>
    </location>
</feature>
<feature type="mutagenesis site" description="Reduces fibril formation." evidence="18">
    <original>T</original>
    <variation>A</variation>
    <location>
        <position position="210"/>
    </location>
</feature>
<feature type="mutagenesis site" description="Forms fibrils at normal levels." evidence="18">
    <original>D</original>
    <variation>A</variation>
    <location>
        <position position="211"/>
    </location>
</feature>
<feature type="mutagenesis site" description="Reduces fibril formation." evidence="18">
    <original>V</original>
    <variation>A</variation>
    <location>
        <position position="213"/>
    </location>
</feature>
<feature type="mutagenesis site" description="Reduces fibril formation." evidence="18">
    <original>P</original>
    <variation>A</variation>
    <location>
        <position position="214"/>
    </location>
</feature>
<feature type="mutagenesis site" description="Reduces fibril formation." evidence="18">
    <original>F</original>
    <variation>A</variation>
    <location>
        <position position="215"/>
    </location>
</feature>
<feature type="mutagenesis site" description="Has normal fibril formation. Reduces fibril formation; when associated with L-207." evidence="18">
    <original>F</original>
    <variation>L</variation>
    <location>
        <position position="215"/>
    </location>
</feature>
<feature type="mutagenesis site" description="Abolishes interchain and intrachain disulfide linkage formation." evidence="17">
    <original>C</original>
    <variation>S</variation>
    <location>
        <position position="301"/>
    </location>
</feature>
<feature type="mutagenesis site" description="Loss of proteolytic cleavage." evidence="6">
    <original>KR</original>
    <variation>QQ</variation>
    <location>
        <begin position="468"/>
        <end position="469"/>
    </location>
</feature>
<feature type="mutagenesis site" description="Does not affect dimer formation." evidence="17">
    <original>C</original>
    <variation>S</variation>
    <location>
        <position position="475"/>
    </location>
</feature>
<feature type="mutagenesis site" description="Abolishes disulfide linkage rearrangement that converts dimer to monomer." evidence="17">
    <original>C</original>
    <variation>S</variation>
    <location>
        <position position="516"/>
    </location>
</feature>
<feature type="mutagenesis site" description="Abolishes disulfide linkage rearrangement that converts dimer to monomer." evidence="17">
    <original>C</original>
    <variation>S</variation>
    <location>
        <position position="525"/>
    </location>
</feature>
<feature type="mutagenesis site" description="Abolishes disulfide linkage rearrangement that converts dimer to monomer." evidence="17">
    <original>C</original>
    <variation>S</variation>
    <location>
        <position position="533"/>
    </location>
</feature>
<feature type="mutagenesis site" description="Abolishes disulfide linkage rearrangement that converts dimer to monomer." evidence="17">
    <original>C</original>
    <variation>S</variation>
    <location>
        <position position="541"/>
    </location>
</feature>
<feature type="mutagenesis site" description="Abolishes disulfide linkage rearrangement that converts dimer to monomer." evidence="17">
    <original>C</original>
    <variation>S</variation>
    <location>
        <position position="550"/>
    </location>
</feature>
<feature type="mutagenesis site" description="Abolishes disulfide linkage rearrangement that converts dimer to monomer." evidence="17">
    <original>C</original>
    <variation>S</variation>
    <location>
        <position position="566"/>
    </location>
</feature>
<feature type="mutagenesis site" description="Impairs the cleavage of the C-terminal fragment." evidence="13">
    <original>TQLI</original>
    <variation>DDDD</variation>
    <location>
        <begin position="582"/>
        <end position="585"/>
    </location>
</feature>
<feature type="mutagenesis site" description="Impairs the cleavage of the C-terminal fragment." evidence="13">
    <location>
        <begin position="582"/>
        <end position="585"/>
    </location>
</feature>
<feature type="mutagenesis site" description="Impairs the cleavage of the C-terminal fragment." evidence="13">
    <original>QL</original>
    <variation>DD</variation>
    <location>
        <begin position="583"/>
        <end position="584"/>
    </location>
</feature>
<feature type="mutagenesis site" description="Leads to inefficient ER exit, endocytic trafficking and protein maturation." evidence="10">
    <location>
        <begin position="637"/>
        <end position="661"/>
    </location>
</feature>
<feature type="mutagenesis site" description="Leads to inefficient endocytic trafficking." evidence="10">
    <original>LL</original>
    <variation>AA</variation>
    <location>
        <begin position="655"/>
        <end position="656"/>
    </location>
</feature>
<feature type="mutagenesis site" description="Leads to inefficient ER exit." evidence="10">
    <original>V</original>
    <variation>D</variation>
    <location>
        <position position="661"/>
    </location>
</feature>
<feature type="sequence conflict" description="In Ref. 4; no nucleotide entry." evidence="25" ref="4">
    <original>V</original>
    <variation>F</variation>
    <location>
        <position position="162"/>
    </location>
</feature>
<feature type="sequence conflict" description="In Ref. 1; AAA60121 and 6; AAB19181." evidence="25" ref="1 6">
    <original>L</original>
    <variation>P</variation>
    <location>
        <position position="274"/>
    </location>
</feature>
<feature type="sequence conflict" description="In Ref. 9; BAH13223." evidence="25" ref="9">
    <original>G</original>
    <variation>S</variation>
    <location>
        <position position="373"/>
    </location>
</feature>
<feature type="sequence conflict" description="In Ref. 2; AA sequence." evidence="25" ref="2">
    <original>G</original>
    <variation>GG</variation>
    <location>
        <position position="592"/>
    </location>
</feature>
<feature type="sequence conflict" description="In Ref. 1; AAA60121." evidence="25" ref="1">
    <original>P</original>
    <variation>R</variation>
    <location>
        <position position="597"/>
    </location>
</feature>
<keyword id="KW-0002">3D-structure</keyword>
<keyword id="KW-0025">Alternative splicing</keyword>
<keyword id="KW-0165">Cleavage on pair of basic residues</keyword>
<keyword id="KW-0903">Direct protein sequencing</keyword>
<keyword id="KW-1015">Disulfide bond</keyword>
<keyword id="KW-0256">Endoplasmic reticulum</keyword>
<keyword id="KW-0967">Endosome</keyword>
<keyword id="KW-0325">Glycoprotein</keyword>
<keyword id="KW-0333">Golgi apparatus</keyword>
<keyword id="KW-0470">Melanin biosynthesis</keyword>
<keyword id="KW-0472">Membrane</keyword>
<keyword id="KW-1267">Proteomics identification</keyword>
<keyword id="KW-1185">Reference proteome</keyword>
<keyword id="KW-0677">Repeat</keyword>
<keyword id="KW-0964">Secreted</keyword>
<keyword id="KW-0730">Sialic acid</keyword>
<keyword id="KW-0732">Signal</keyword>
<keyword id="KW-0812">Transmembrane</keyword>
<keyword id="KW-1133">Transmembrane helix</keyword>
<organism>
    <name type="scientific">Homo sapiens</name>
    <name type="common">Human</name>
    <dbReference type="NCBI Taxonomy" id="9606"/>
    <lineage>
        <taxon>Eukaryota</taxon>
        <taxon>Metazoa</taxon>
        <taxon>Chordata</taxon>
        <taxon>Craniata</taxon>
        <taxon>Vertebrata</taxon>
        <taxon>Euteleostomi</taxon>
        <taxon>Mammalia</taxon>
        <taxon>Eutheria</taxon>
        <taxon>Euarchontoglires</taxon>
        <taxon>Primates</taxon>
        <taxon>Haplorrhini</taxon>
        <taxon>Catarrhini</taxon>
        <taxon>Hominidae</taxon>
        <taxon>Homo</taxon>
    </lineage>
</organism>
<evidence type="ECO:0000255" key="1"/>
<evidence type="ECO:0000255" key="2">
    <source>
        <dbReference type="PROSITE-ProRule" id="PRU00151"/>
    </source>
</evidence>
<evidence type="ECO:0000256" key="3">
    <source>
        <dbReference type="SAM" id="MobiDB-lite"/>
    </source>
</evidence>
<evidence type="ECO:0000269" key="4">
    <source>
    </source>
</evidence>
<evidence type="ECO:0000269" key="5">
    <source>
    </source>
</evidence>
<evidence type="ECO:0000269" key="6">
    <source>
    </source>
</evidence>
<evidence type="ECO:0000269" key="7">
    <source>
    </source>
</evidence>
<evidence type="ECO:0000269" key="8">
    <source>
    </source>
</evidence>
<evidence type="ECO:0000269" key="9">
    <source>
    </source>
</evidence>
<evidence type="ECO:0000269" key="10">
    <source>
    </source>
</evidence>
<evidence type="ECO:0000269" key="11">
    <source>
    </source>
</evidence>
<evidence type="ECO:0000269" key="12">
    <source>
    </source>
</evidence>
<evidence type="ECO:0000269" key="13">
    <source>
    </source>
</evidence>
<evidence type="ECO:0000269" key="14">
    <source>
    </source>
</evidence>
<evidence type="ECO:0000269" key="15">
    <source>
    </source>
</evidence>
<evidence type="ECO:0000269" key="16">
    <source>
    </source>
</evidence>
<evidence type="ECO:0000269" key="17">
    <source>
    </source>
</evidence>
<evidence type="ECO:0000269" key="18">
    <source>
    </source>
</evidence>
<evidence type="ECO:0000269" key="19">
    <source>
    </source>
</evidence>
<evidence type="ECO:0000269" key="20">
    <source>
    </source>
</evidence>
<evidence type="ECO:0000269" key="21">
    <source>
    </source>
</evidence>
<evidence type="ECO:0000269" key="22">
    <source>
    </source>
</evidence>
<evidence type="ECO:0000303" key="23">
    <source>
    </source>
</evidence>
<evidence type="ECO:0000303" key="24">
    <source>
    </source>
</evidence>
<evidence type="ECO:0000305" key="25"/>
<evidence type="ECO:0000305" key="26">
    <source>
    </source>
</evidence>
<evidence type="ECO:0000305" key="27">
    <source>
    </source>
</evidence>
<sequence>MDLVLKRCLLHLAVIGALLAVGATKVPRNQDWLGVSRQLRTKAWNRQLYPEWTEAQRLDCWRGGQVSLKVSNDGPTLIGANASFSIALNFPGSQKVLPDGQVIWVNNTIINGSQVWGGQPVYPQETDDACIFPDGGPCPSGSWSQKRSFVYVWKTWGQYWQVLGGPVSGLSIGTGRAMLGTHTMEVTVYHRRGSRSYVPLAHSSSAFTITDQVPFSVSVSQLRALDGGNKHFLRNQPLTFALQLHDPSGYLAEADLSYTWDFGDSSGTLISRALVVTHTYLEPGPVTAQVVLQAAIPLTSCGSSPVPGTTDGHRPTAEAPNTTAGQVPTTEVVGTTPGQAPTAEPSGTTSVQVPTTEVISTAPVQMPTAESTGMTPEKVPVSEVMGTTLAEMSTPEATGMTPAEVSIVVLSGTTAAQVTTTEWVETTARELPIPEPEGPDASSIMSTESITGSLGPLLDGTATLRLVKRQVPLDCVLYRYGSFSVTLDIVQGIESAEILQAVPSGEGDAFELTVSCQGGLPKEACMEISSPGCQPPAQRLCQPVLPSPACQLVLHQILKGGSGTYCLNVSLADTNSLAVVSTQLIMPGQEAGLGQVPLIVGILLVLMAVVLASLIYRRRLMKQDFSVPQLPHSSSHWLRLPRIFCSCPIGENSPLLSGQQV</sequence>
<accession>P40967</accession>
<accession>B3KS57</accession>
<accession>B7Z6D7</accession>
<accession>Q12763</accession>
<accession>Q14448</accession>
<accession>Q14817</accession>
<accession>Q16565</accession>
<reference key="1">
    <citation type="journal article" date="1991" name="Proc. Natl. Acad. Sci. U.S.A.">
        <title>A melanocyte-specific gene, Pmel 17, maps near the silver coat color locus on mouse chromosome 10 and is in a syntenic region on human chromosome 12.</title>
        <authorList>
            <person name="Kwon B.S."/>
            <person name="Chintamaneni C."/>
            <person name="Kozak C.A."/>
            <person name="Copeland N.G."/>
            <person name="Gilbert D.J."/>
            <person name="Jenkins N.A."/>
            <person name="Barton D."/>
            <person name="Francke U."/>
            <person name="Kobayashi Y."/>
            <person name="Kim K.-K."/>
        </authorList>
    </citation>
    <scope>NUCLEOTIDE SEQUENCE [MRNA] (ISOFORM 2)</scope>
</reference>
<reference key="2">
    <citation type="journal article" date="1994" name="DNA Cell Biol.">
        <title>Cloning and expression of the gene for the melanoma-associated ME20 antigen.</title>
        <authorList>
            <person name="Maresh G.A."/>
            <person name="Marken J.S."/>
            <person name="Neubauer M."/>
            <person name="Aruffo A."/>
            <person name="Hellstroem I."/>
            <person name="Hellstroem K.E."/>
            <person name="Marquardt H."/>
        </authorList>
    </citation>
    <scope>NUCLEOTIDE SEQUENCE [MRNA] (ISOFORM 1)</scope>
    <scope>SIGNAL PEPTIDE</scope>
    <scope>SUBCELLULAR LOCATION</scope>
    <scope>PROTEIN SEQUENCE OF 25-53</scope>
</reference>
<reference key="3">
    <citation type="journal article" date="1994" name="J. Biol. Chem.">
        <title>Molecular characterization of the melanocyte lineage-specific antigen gp100.</title>
        <authorList>
            <person name="Adema G.J."/>
            <person name="de Boer A.J."/>
            <person name="Vogel A.M."/>
            <person name="Loenen W.A."/>
            <person name="Figdor C.G."/>
        </authorList>
    </citation>
    <scope>NUCLEOTIDE SEQUENCE [MRNA] (ISOFORM 1)</scope>
</reference>
<reference key="4">
    <citation type="journal article" date="1994" name="Proc. Natl. Acad. Sci. U.S.A.">
        <title>Identification of a human melanoma antigen recognized by tumor-infiltrating lymphocytes associated with in vivo tumor rejection.</title>
        <authorList>
            <person name="Kawakami Y."/>
            <person name="Eliyahu S."/>
            <person name="Delgado C.H."/>
            <person name="Robbins P.F."/>
            <person name="Sakaguchi K."/>
            <person name="Appella E."/>
            <person name="Yannelli J.R."/>
            <person name="Adema G.J."/>
            <person name="Miki T."/>
            <person name="Rosenberg S.A."/>
        </authorList>
    </citation>
    <scope>NUCLEOTIDE SEQUENCE [MRNA] (ISOFORM 1)</scope>
    <scope>FUNCTION</scope>
    <scope>TISSUE SPECIFICITY</scope>
</reference>
<reference key="5">
    <citation type="journal article" date="1996" name="J. Invest. Dermatol.">
        <title>Genomic organization and sequence of D12S53E (Pmel 17), the human homologue of the mouse silver (si) locus.</title>
        <authorList>
            <person name="Bailin T."/>
            <person name="Lee S.-T."/>
            <person name="Spritz R.A."/>
        </authorList>
    </citation>
    <scope>NUCLEOTIDE SEQUENCE [GENOMIC DNA]</scope>
    <scope>ALTERNATIVE SPLICING (ISOFORM 1)</scope>
</reference>
<reference key="6">
    <citation type="journal article" date="1996" name="Pigment Cell Res.">
        <title>Genomic organization and FISH mapping of human Pmel 17, the putative silver locus.</title>
        <authorList>
            <person name="Kim K.K."/>
            <person name="Youn B.S."/>
            <person name="Heng H.H.Q."/>
            <person name="Shi X.-M."/>
            <person name="Tsui L.-C."/>
            <person name="Lee Z.H."/>
            <person name="Pickard R.T."/>
            <person name="Kwon B.S."/>
        </authorList>
    </citation>
    <scope>NUCLEOTIDE SEQUENCE [GENOMIC DNA]</scope>
    <scope>ALTERNATIVE SPLICING (ISOFORM 1)</scope>
</reference>
<reference key="7">
    <citation type="submission" date="1990-11" db="EMBL/GenBank/DDBJ databases">
        <title>Sequence of a melanocyte specific secreted glycoprotein.</title>
        <authorList>
            <person name="Vogel A."/>
        </authorList>
    </citation>
    <scope>NUCLEOTIDE SEQUENCE [MRNA] (ISOFORM 1)</scope>
</reference>
<reference key="8">
    <citation type="submission" date="2003-05" db="EMBL/GenBank/DDBJ databases">
        <title>Cloning of human full-length CDSs in BD Creator(TM) system donor vector.</title>
        <authorList>
            <person name="Kalnine N."/>
            <person name="Chen X."/>
            <person name="Rolfs A."/>
            <person name="Halleck A."/>
            <person name="Hines L."/>
            <person name="Eisenstein S."/>
            <person name="Koundinya M."/>
            <person name="Raphael J."/>
            <person name="Moreira D."/>
            <person name="Kelley T."/>
            <person name="LaBaer J."/>
            <person name="Lin Y."/>
            <person name="Phelan M."/>
            <person name="Farmer A."/>
        </authorList>
    </citation>
    <scope>NUCLEOTIDE SEQUENCE [LARGE SCALE MRNA] (ISOFORM 1)</scope>
</reference>
<reference key="9">
    <citation type="journal article" date="2004" name="Nat. Genet.">
        <title>Complete sequencing and characterization of 21,243 full-length human cDNAs.</title>
        <authorList>
            <person name="Ota T."/>
            <person name="Suzuki Y."/>
            <person name="Nishikawa T."/>
            <person name="Otsuki T."/>
            <person name="Sugiyama T."/>
            <person name="Irie R."/>
            <person name="Wakamatsu A."/>
            <person name="Hayashi K."/>
            <person name="Sato H."/>
            <person name="Nagai K."/>
            <person name="Kimura K."/>
            <person name="Makita H."/>
            <person name="Sekine M."/>
            <person name="Obayashi M."/>
            <person name="Nishi T."/>
            <person name="Shibahara T."/>
            <person name="Tanaka T."/>
            <person name="Ishii S."/>
            <person name="Yamamoto J."/>
            <person name="Saito K."/>
            <person name="Kawai Y."/>
            <person name="Isono Y."/>
            <person name="Nakamura Y."/>
            <person name="Nagahari K."/>
            <person name="Murakami K."/>
            <person name="Yasuda T."/>
            <person name="Iwayanagi T."/>
            <person name="Wagatsuma M."/>
            <person name="Shiratori A."/>
            <person name="Sudo H."/>
            <person name="Hosoiri T."/>
            <person name="Kaku Y."/>
            <person name="Kodaira H."/>
            <person name="Kondo H."/>
            <person name="Sugawara M."/>
            <person name="Takahashi M."/>
            <person name="Kanda K."/>
            <person name="Yokoi T."/>
            <person name="Furuya T."/>
            <person name="Kikkawa E."/>
            <person name="Omura Y."/>
            <person name="Abe K."/>
            <person name="Kamihara K."/>
            <person name="Katsuta N."/>
            <person name="Sato K."/>
            <person name="Tanikawa M."/>
            <person name="Yamazaki M."/>
            <person name="Ninomiya K."/>
            <person name="Ishibashi T."/>
            <person name="Yamashita H."/>
            <person name="Murakawa K."/>
            <person name="Fujimori K."/>
            <person name="Tanai H."/>
            <person name="Kimata M."/>
            <person name="Watanabe M."/>
            <person name="Hiraoka S."/>
            <person name="Chiba Y."/>
            <person name="Ishida S."/>
            <person name="Ono Y."/>
            <person name="Takiguchi S."/>
            <person name="Watanabe S."/>
            <person name="Yosida M."/>
            <person name="Hotuta T."/>
            <person name="Kusano J."/>
            <person name="Kanehori K."/>
            <person name="Takahashi-Fujii A."/>
            <person name="Hara H."/>
            <person name="Tanase T.-O."/>
            <person name="Nomura Y."/>
            <person name="Togiya S."/>
            <person name="Komai F."/>
            <person name="Hara R."/>
            <person name="Takeuchi K."/>
            <person name="Arita M."/>
            <person name="Imose N."/>
            <person name="Musashino K."/>
            <person name="Yuuki H."/>
            <person name="Oshima A."/>
            <person name="Sasaki N."/>
            <person name="Aotsuka S."/>
            <person name="Yoshikawa Y."/>
            <person name="Matsunawa H."/>
            <person name="Ichihara T."/>
            <person name="Shiohata N."/>
            <person name="Sano S."/>
            <person name="Moriya S."/>
            <person name="Momiyama H."/>
            <person name="Satoh N."/>
            <person name="Takami S."/>
            <person name="Terashima Y."/>
            <person name="Suzuki O."/>
            <person name="Nakagawa S."/>
            <person name="Senoh A."/>
            <person name="Mizoguchi H."/>
            <person name="Goto Y."/>
            <person name="Shimizu F."/>
            <person name="Wakebe H."/>
            <person name="Hishigaki H."/>
            <person name="Watanabe T."/>
            <person name="Sugiyama A."/>
            <person name="Takemoto M."/>
            <person name="Kawakami B."/>
            <person name="Yamazaki M."/>
            <person name="Watanabe K."/>
            <person name="Kumagai A."/>
            <person name="Itakura S."/>
            <person name="Fukuzumi Y."/>
            <person name="Fujimori Y."/>
            <person name="Komiyama M."/>
            <person name="Tashiro H."/>
            <person name="Tanigami A."/>
            <person name="Fujiwara T."/>
            <person name="Ono T."/>
            <person name="Yamada K."/>
            <person name="Fujii Y."/>
            <person name="Ozaki K."/>
            <person name="Hirao M."/>
            <person name="Ohmori Y."/>
            <person name="Kawabata A."/>
            <person name="Hikiji T."/>
            <person name="Kobatake N."/>
            <person name="Inagaki H."/>
            <person name="Ikema Y."/>
            <person name="Okamoto S."/>
            <person name="Okitani R."/>
            <person name="Kawakami T."/>
            <person name="Noguchi S."/>
            <person name="Itoh T."/>
            <person name="Shigeta K."/>
            <person name="Senba T."/>
            <person name="Matsumura K."/>
            <person name="Nakajima Y."/>
            <person name="Mizuno T."/>
            <person name="Morinaga M."/>
            <person name="Sasaki M."/>
            <person name="Togashi T."/>
            <person name="Oyama M."/>
            <person name="Hata H."/>
            <person name="Watanabe M."/>
            <person name="Komatsu T."/>
            <person name="Mizushima-Sugano J."/>
            <person name="Satoh T."/>
            <person name="Shirai Y."/>
            <person name="Takahashi Y."/>
            <person name="Nakagawa K."/>
            <person name="Okumura K."/>
            <person name="Nagase T."/>
            <person name="Nomura N."/>
            <person name="Kikuchi H."/>
            <person name="Masuho Y."/>
            <person name="Yamashita R."/>
            <person name="Nakai K."/>
            <person name="Yada T."/>
            <person name="Nakamura Y."/>
            <person name="Ohara O."/>
            <person name="Isogai T."/>
            <person name="Sugano S."/>
        </authorList>
    </citation>
    <scope>NUCLEOTIDE SEQUENCE [LARGE SCALE MRNA] (ISOFORMS 1 AND 3)</scope>
    <source>
        <tissue>Placenta</tissue>
        <tissue>Spleen</tissue>
    </source>
</reference>
<reference key="10">
    <citation type="journal article" date="2006" name="Nature">
        <title>The finished DNA sequence of human chromosome 12.</title>
        <authorList>
            <person name="Scherer S.E."/>
            <person name="Muzny D.M."/>
            <person name="Buhay C.J."/>
            <person name="Chen R."/>
            <person name="Cree A."/>
            <person name="Ding Y."/>
            <person name="Dugan-Rocha S."/>
            <person name="Gill R."/>
            <person name="Gunaratne P."/>
            <person name="Harris R.A."/>
            <person name="Hawes A.C."/>
            <person name="Hernandez J."/>
            <person name="Hodgson A.V."/>
            <person name="Hume J."/>
            <person name="Jackson A."/>
            <person name="Khan Z.M."/>
            <person name="Kovar-Smith C."/>
            <person name="Lewis L.R."/>
            <person name="Lozado R.J."/>
            <person name="Metzker M.L."/>
            <person name="Milosavljevic A."/>
            <person name="Miner G.R."/>
            <person name="Montgomery K.T."/>
            <person name="Morgan M.B."/>
            <person name="Nazareth L.V."/>
            <person name="Scott G."/>
            <person name="Sodergren E."/>
            <person name="Song X.-Z."/>
            <person name="Steffen D."/>
            <person name="Lovering R.C."/>
            <person name="Wheeler D.A."/>
            <person name="Worley K.C."/>
            <person name="Yuan Y."/>
            <person name="Zhang Z."/>
            <person name="Adams C.Q."/>
            <person name="Ansari-Lari M.A."/>
            <person name="Ayele M."/>
            <person name="Brown M.J."/>
            <person name="Chen G."/>
            <person name="Chen Z."/>
            <person name="Clerc-Blankenburg K.P."/>
            <person name="Davis C."/>
            <person name="Delgado O."/>
            <person name="Dinh H.H."/>
            <person name="Draper H."/>
            <person name="Gonzalez-Garay M.L."/>
            <person name="Havlak P."/>
            <person name="Jackson L.R."/>
            <person name="Jacob L.S."/>
            <person name="Kelly S.H."/>
            <person name="Li L."/>
            <person name="Li Z."/>
            <person name="Liu J."/>
            <person name="Liu W."/>
            <person name="Lu J."/>
            <person name="Maheshwari M."/>
            <person name="Nguyen B.-V."/>
            <person name="Okwuonu G.O."/>
            <person name="Pasternak S."/>
            <person name="Perez L.M."/>
            <person name="Plopper F.J.H."/>
            <person name="Santibanez J."/>
            <person name="Shen H."/>
            <person name="Tabor P.E."/>
            <person name="Verduzco D."/>
            <person name="Waldron L."/>
            <person name="Wang Q."/>
            <person name="Williams G.A."/>
            <person name="Zhang J."/>
            <person name="Zhou J."/>
            <person name="Allen C.C."/>
            <person name="Amin A.G."/>
            <person name="Anyalebechi V."/>
            <person name="Bailey M."/>
            <person name="Barbaria J.A."/>
            <person name="Bimage K.E."/>
            <person name="Bryant N.P."/>
            <person name="Burch P.E."/>
            <person name="Burkett C.E."/>
            <person name="Burrell K.L."/>
            <person name="Calderon E."/>
            <person name="Cardenas V."/>
            <person name="Carter K."/>
            <person name="Casias K."/>
            <person name="Cavazos I."/>
            <person name="Cavazos S.R."/>
            <person name="Ceasar H."/>
            <person name="Chacko J."/>
            <person name="Chan S.N."/>
            <person name="Chavez D."/>
            <person name="Christopoulos C."/>
            <person name="Chu J."/>
            <person name="Cockrell R."/>
            <person name="Cox C.D."/>
            <person name="Dang M."/>
            <person name="Dathorne S.R."/>
            <person name="David R."/>
            <person name="Davis C.M."/>
            <person name="Davy-Carroll L."/>
            <person name="Deshazo D.R."/>
            <person name="Donlin J.E."/>
            <person name="D'Souza L."/>
            <person name="Eaves K.A."/>
            <person name="Egan A."/>
            <person name="Emery-Cohen A.J."/>
            <person name="Escotto M."/>
            <person name="Flagg N."/>
            <person name="Forbes L.D."/>
            <person name="Gabisi A.M."/>
            <person name="Garza M."/>
            <person name="Hamilton C."/>
            <person name="Henderson N."/>
            <person name="Hernandez O."/>
            <person name="Hines S."/>
            <person name="Hogues M.E."/>
            <person name="Huang M."/>
            <person name="Idlebird D.G."/>
            <person name="Johnson R."/>
            <person name="Jolivet A."/>
            <person name="Jones S."/>
            <person name="Kagan R."/>
            <person name="King L.M."/>
            <person name="Leal B."/>
            <person name="Lebow H."/>
            <person name="Lee S."/>
            <person name="LeVan J.M."/>
            <person name="Lewis L.C."/>
            <person name="London P."/>
            <person name="Lorensuhewa L.M."/>
            <person name="Loulseged H."/>
            <person name="Lovett D.A."/>
            <person name="Lucier A."/>
            <person name="Lucier R.L."/>
            <person name="Ma J."/>
            <person name="Madu R.C."/>
            <person name="Mapua P."/>
            <person name="Martindale A.D."/>
            <person name="Martinez E."/>
            <person name="Massey E."/>
            <person name="Mawhiney S."/>
            <person name="Meador M.G."/>
            <person name="Mendez S."/>
            <person name="Mercado C."/>
            <person name="Mercado I.C."/>
            <person name="Merritt C.E."/>
            <person name="Miner Z.L."/>
            <person name="Minja E."/>
            <person name="Mitchell T."/>
            <person name="Mohabbat F."/>
            <person name="Mohabbat K."/>
            <person name="Montgomery B."/>
            <person name="Moore N."/>
            <person name="Morris S."/>
            <person name="Munidasa M."/>
            <person name="Ngo R.N."/>
            <person name="Nguyen N.B."/>
            <person name="Nickerson E."/>
            <person name="Nwaokelemeh O.O."/>
            <person name="Nwokenkwo S."/>
            <person name="Obregon M."/>
            <person name="Oguh M."/>
            <person name="Oragunye N."/>
            <person name="Oviedo R.J."/>
            <person name="Parish B.J."/>
            <person name="Parker D.N."/>
            <person name="Parrish J."/>
            <person name="Parks K.L."/>
            <person name="Paul H.A."/>
            <person name="Payton B.A."/>
            <person name="Perez A."/>
            <person name="Perrin W."/>
            <person name="Pickens A."/>
            <person name="Primus E.L."/>
            <person name="Pu L.-L."/>
            <person name="Puazo M."/>
            <person name="Quiles M.M."/>
            <person name="Quiroz J.B."/>
            <person name="Rabata D."/>
            <person name="Reeves K."/>
            <person name="Ruiz S.J."/>
            <person name="Shao H."/>
            <person name="Sisson I."/>
            <person name="Sonaike T."/>
            <person name="Sorelle R.P."/>
            <person name="Sutton A.E."/>
            <person name="Svatek A.F."/>
            <person name="Svetz L.A."/>
            <person name="Tamerisa K.S."/>
            <person name="Taylor T.R."/>
            <person name="Teague B."/>
            <person name="Thomas N."/>
            <person name="Thorn R.D."/>
            <person name="Trejos Z.Y."/>
            <person name="Trevino B.K."/>
            <person name="Ukegbu O.N."/>
            <person name="Urban J.B."/>
            <person name="Vasquez L.I."/>
            <person name="Vera V.A."/>
            <person name="Villasana D.M."/>
            <person name="Wang L."/>
            <person name="Ward-Moore S."/>
            <person name="Warren J.T."/>
            <person name="Wei X."/>
            <person name="White F."/>
            <person name="Williamson A.L."/>
            <person name="Wleczyk R."/>
            <person name="Wooden H.S."/>
            <person name="Wooden S.H."/>
            <person name="Yen J."/>
            <person name="Yoon L."/>
            <person name="Yoon V."/>
            <person name="Zorrilla S.E."/>
            <person name="Nelson D."/>
            <person name="Kucherlapati R."/>
            <person name="Weinstock G."/>
            <person name="Gibbs R.A."/>
        </authorList>
    </citation>
    <scope>NUCLEOTIDE SEQUENCE [LARGE SCALE GENOMIC DNA]</scope>
</reference>
<reference key="11">
    <citation type="submission" date="2005-07" db="EMBL/GenBank/DDBJ databases">
        <authorList>
            <person name="Mural R.J."/>
            <person name="Istrail S."/>
            <person name="Sutton G.G."/>
            <person name="Florea L."/>
            <person name="Halpern A.L."/>
            <person name="Mobarry C.M."/>
            <person name="Lippert R."/>
            <person name="Walenz B."/>
            <person name="Shatkay H."/>
            <person name="Dew I."/>
            <person name="Miller J.R."/>
            <person name="Flanigan M.J."/>
            <person name="Edwards N.J."/>
            <person name="Bolanos R."/>
            <person name="Fasulo D."/>
            <person name="Halldorsson B.V."/>
            <person name="Hannenhalli S."/>
            <person name="Turner R."/>
            <person name="Yooseph S."/>
            <person name="Lu F."/>
            <person name="Nusskern D.R."/>
            <person name="Shue B.C."/>
            <person name="Zheng X.H."/>
            <person name="Zhong F."/>
            <person name="Delcher A.L."/>
            <person name="Huson D.H."/>
            <person name="Kravitz S.A."/>
            <person name="Mouchard L."/>
            <person name="Reinert K."/>
            <person name="Remington K.A."/>
            <person name="Clark A.G."/>
            <person name="Waterman M.S."/>
            <person name="Eichler E.E."/>
            <person name="Adams M.D."/>
            <person name="Hunkapiller M.W."/>
            <person name="Myers E.W."/>
            <person name="Venter J.C."/>
        </authorList>
    </citation>
    <scope>NUCLEOTIDE SEQUENCE [LARGE SCALE GENOMIC DNA]</scope>
</reference>
<reference key="12">
    <citation type="journal article" date="2004" name="Genome Res.">
        <title>The status, quality, and expansion of the NIH full-length cDNA project: the Mammalian Gene Collection (MGC).</title>
        <authorList>
            <consortium name="The MGC Project Team"/>
        </authorList>
    </citation>
    <scope>NUCLEOTIDE SEQUENCE [LARGE SCALE MRNA] (ISOFORM 1)</scope>
    <source>
        <tissue>Placenta</tissue>
    </source>
</reference>
<reference key="13">
    <citation type="journal article" date="2003" name="J. Invest. Dermatol.">
        <title>A novel splice variant of Pmel17 expressed by human melanocytes and melanoma cells lacking some of the internal repeats.</title>
        <authorList>
            <person name="Nichols S.E."/>
            <person name="Harper D.C."/>
            <person name="Berson J.F."/>
            <person name="Marks M.S."/>
        </authorList>
    </citation>
    <scope>ALTERNATIVE SPLICING (ISOFORMS 4 AND 5)</scope>
</reference>
<reference key="14">
    <citation type="journal article" date="1995" name="J. Immunol.">
        <title>Recognition of multiple epitopes in the human melanoma antigen gp100 by tumor-infiltrating T lymphocytes associated with in vivo tumor regression.</title>
        <authorList>
            <person name="Kawakami Y."/>
            <person name="Eliyahu S."/>
            <person name="Jennings C."/>
            <person name="Sakaguchi K."/>
            <person name="Kang X."/>
            <person name="Southwood S."/>
            <person name="Robbins P.F."/>
            <person name="Sette A."/>
            <person name="Appella E."/>
            <person name="Rosenberg S.A."/>
        </authorList>
    </citation>
    <scope>FUNCTION</scope>
    <scope>REGION</scope>
</reference>
<reference key="15">
    <citation type="journal article" date="2001" name="Mol. Biol. Cell">
        <title>Pmel17 initiates premelanosome morphogenesis within multivesicular bodies.</title>
        <authorList>
            <person name="Berson J.F."/>
            <person name="Harper D.C."/>
            <person name="Tenza D."/>
            <person name="Raposo G."/>
            <person name="Marks M.S."/>
        </authorList>
    </citation>
    <scope>FUNCTION</scope>
    <scope>SUBCELLULAR LOCATION</scope>
    <scope>PROTEOLYTIC PROCESSING</scope>
    <scope>GLYCOSYLATION</scope>
</reference>
<reference key="16">
    <citation type="journal article" date="2003" name="J. Cell Biol.">
        <title>Proprotein convertase cleavage liberates a fibrillogenic fragment of a resident glycoprotein to initiate melanosome biogenesis.</title>
        <authorList>
            <person name="Berson J.F."/>
            <person name="Theos A.C."/>
            <person name="Harper D.C."/>
            <person name="Tenza D."/>
            <person name="Raposo G."/>
            <person name="Marks M.S."/>
        </authorList>
    </citation>
    <scope>PROTEOLYTIC PROCESSING</scope>
    <scope>SITE</scope>
    <scope>MUTAGENESIS OF 468-LYS--ARG-469</scope>
</reference>
<reference key="17">
    <citation type="journal article" date="2003" name="J. Proteome Res.">
        <title>Proteomic analysis of early melanosomes: identification of novel melanosomal proteins.</title>
        <authorList>
            <person name="Basrur V."/>
            <person name="Yang F."/>
            <person name="Kushimoto T."/>
            <person name="Higashimoto Y."/>
            <person name="Yasumoto K."/>
            <person name="Valencia J."/>
            <person name="Muller J."/>
            <person name="Vieira W.D."/>
            <person name="Watabe H."/>
            <person name="Shabanowitz J."/>
            <person name="Hearing V.J."/>
            <person name="Hunt D.F."/>
            <person name="Appella E."/>
        </authorList>
    </citation>
    <scope>SUBCELLULAR LOCATION [LARGE SCALE ANALYSIS]</scope>
    <source>
        <tissue>Melanoma</tissue>
    </source>
</reference>
<reference key="18">
    <citation type="journal article" date="2004" name="J. Biol. Chem.">
        <title>Epitope mapping of the melanosomal matrix protein gp100 (PMEL17): rapid processing in the endoplasmic reticulum and glycosylation in the early Golgi compartment.</title>
        <authorList>
            <person name="Yasumoto K.-I."/>
            <person name="Watabe H."/>
            <person name="Valencia J.C."/>
            <person name="Kushimoto T."/>
            <person name="Kobayashi T."/>
            <person name="Appella E."/>
            <person name="Hearing V.J."/>
        </authorList>
    </citation>
    <scope>PROTEOLYTIC PROCESSING</scope>
    <scope>SUBCELLULAR LOCATION</scope>
    <scope>GLYCOSYLATION</scope>
</reference>
<reference key="19">
    <citation type="journal article" date="2005" name="J. Biol. Chem.">
        <title>MART-1 is required for the function of the melanosomal matrix protein PMEL17/GP100 and the maturation of melanosomes.</title>
        <authorList>
            <person name="Hoashi T."/>
            <person name="Watabe H."/>
            <person name="Muller J."/>
            <person name="Yamaguchi Y."/>
            <person name="Vieira W.D."/>
            <person name="Hearing V.J."/>
        </authorList>
    </citation>
    <scope>PROTEOLYTIC PROCESSING</scope>
    <scope>SUBCELLULAR LOCATION</scope>
    <scope>INTERACTION WITH MLANA</scope>
</reference>
<reference key="20">
    <citation type="journal article" date="2006" name="J. Biol. Chem.">
        <title>The repeat domain of the melanosomal matrix protein PMEL17/GP100 is required for the formation of organellar fibers.</title>
        <authorList>
            <person name="Hoashi T."/>
            <person name="Muller J."/>
            <person name="Vieira W.D."/>
            <person name="Rouzaud F."/>
            <person name="Kikuchi K."/>
            <person name="Tamaki K."/>
            <person name="Hearing V.J."/>
        </authorList>
    </citation>
    <scope>DOMAIN RPT</scope>
</reference>
<reference key="21">
    <citation type="journal article" date="2006" name="J. Proteome Res.">
        <title>Proteomic and bioinformatic characterization of the biogenesis and function of melanosomes.</title>
        <authorList>
            <person name="Chi A."/>
            <person name="Valencia J.C."/>
            <person name="Hu Z.-Z."/>
            <person name="Watabe H."/>
            <person name="Yamaguchi H."/>
            <person name="Mangini N.J."/>
            <person name="Huang H."/>
            <person name="Canfield V.A."/>
            <person name="Cheng K.C."/>
            <person name="Yang F."/>
            <person name="Abe R."/>
            <person name="Yamagishi S."/>
            <person name="Shabanowitz J."/>
            <person name="Hearing V.J."/>
            <person name="Wu C."/>
            <person name="Appella E."/>
            <person name="Hunt D.F."/>
        </authorList>
    </citation>
    <scope>SUBCELLULAR LOCATION [LARGE SCALE ANALYSIS]</scope>
    <source>
        <tissue>Melanoma</tissue>
    </source>
</reference>
<reference key="22">
    <citation type="journal article" date="2006" name="Mol. Biol. Cell">
        <title>Dual loss of ER export and endocytic signals with altered melanosome morphology in the silver mutation of Pmel17.</title>
        <authorList>
            <person name="Theos A.C."/>
            <person name="Berson J.F."/>
            <person name="Theos S.C."/>
            <person name="Herman K.E."/>
            <person name="Harper D.C."/>
            <person name="Tenza D."/>
            <person name="Sviderskaya E.V."/>
            <person name="Lamoreux M.L."/>
            <person name="Bennett D.C."/>
            <person name="Raposo G."/>
            <person name="Marks M.S."/>
        </authorList>
    </citation>
    <scope>SUBCELLULAR LOCATION</scope>
    <scope>MUTAGENESIS OF 637-TRP--VAL-661; 655-LEU-LEU-656 AND VAL-661</scope>
    <scope>SITE</scope>
    <scope>GLYCOSYLATION</scope>
</reference>
<reference key="23">
    <citation type="journal article" date="2008" name="J. Biol. Chem.">
        <title>Premelanosome amyloid-like fibrils are composed of only Golgi-processed forms of Pmel17 that have been proteolytically processed in endosomes.</title>
        <authorList>
            <person name="Harper D.C."/>
            <person name="Theos A.C."/>
            <person name="Herman K.E."/>
            <person name="Tenza D."/>
            <person name="Raposo G."/>
            <person name="Marks M.S."/>
        </authorList>
    </citation>
    <scope>PROTEOLYTIC PROCESSING</scope>
    <scope>GLYCOSYLATION</scope>
    <scope>SUBCELLULAR LOCATION</scope>
</reference>
<reference key="24">
    <citation type="journal article" date="2009" name="J. Biol. Chem.">
        <title>Formation of Pmel17 amyloid is regulated by juxtamembrane metalloproteinase cleavage, and the resulting C-terminal fragment is a substrate for gamma-secretase.</title>
        <authorList>
            <person name="Kummer M.P."/>
            <person name="Maruyama H."/>
            <person name="Huelsmann C."/>
            <person name="Baches S."/>
            <person name="Weggen S."/>
            <person name="Koo E.H."/>
        </authorList>
    </citation>
    <scope>PROTEOLYTIC PROCESSING</scope>
    <scope>SITE</scope>
    <scope>MUTAGENESIS OF 583-GLN-LEU-584 AND 582-THR--ILE-585</scope>
    <scope>SUBCELLULAR LOCATION</scope>
</reference>
<reference key="25">
    <citation type="journal article" date="2011" name="Dev. Cell">
        <title>The tetraspanin CD63 regulates ESCRT-independent and -dependent endosomal sorting during melanogenesis.</title>
        <authorList>
            <person name="van Niel G."/>
            <person name="Charrin S."/>
            <person name="Simoes S."/>
            <person name="Romao M."/>
            <person name="Rochin L."/>
            <person name="Saftig P."/>
            <person name="Marks M.S."/>
            <person name="Rubinstein E."/>
            <person name="Raposo G."/>
        </authorList>
    </citation>
    <scope>FUNCTION</scope>
    <scope>SUBCELLULAR LOCATION</scope>
    <scope>INTERACTION WITH CD63</scope>
</reference>
<reference key="26">
    <citation type="journal article" date="2013" name="Proc. Natl. Acad. Sci. U.S.A.">
        <title>BACE2 processes PMEL to form the melanosome amyloid matrix in pigment cells.</title>
        <authorList>
            <person name="Rochin L."/>
            <person name="Hurbain I."/>
            <person name="Serneels L."/>
            <person name="Fort C."/>
            <person name="Watt B."/>
            <person name="Leblanc P."/>
            <person name="Marks M.S."/>
            <person name="De Strooper B."/>
            <person name="Raposo G."/>
            <person name="van Niel G."/>
        </authorList>
    </citation>
    <scope>PROTEOLYTIC PROCESSING</scope>
    <scope>SUBCELLULAR LOCATION</scope>
</reference>
<reference key="27">
    <citation type="journal article" date="2015" name="Cell Rep.">
        <title>Apolipoprotein E Regulates Amyloid Formation within Endosomes of Pigment Cells.</title>
        <authorList>
            <person name="van Niel G."/>
            <person name="Bergam P."/>
            <person name="Di Cicco A."/>
            <person name="Hurbain I."/>
            <person name="Lo Cicero A."/>
            <person name="Dingli F."/>
            <person name="Palmulli R."/>
            <person name="Fort C."/>
            <person name="Potier M.C."/>
            <person name="Schurgers L.J."/>
            <person name="Loew D."/>
            <person name="Levy D."/>
            <person name="Raposo G."/>
        </authorList>
    </citation>
    <scope>FUNCTION</scope>
    <scope>INTERACTION WITH APOE</scope>
    <scope>SUBCELLULAR LOCATION</scope>
</reference>
<reference key="28">
    <citation type="journal article" date="2016" name="J. Biol. Chem.">
        <title>The Kringle-like Domain Facilitates Post-endoplasmic Reticulum Changes to Premelanosome Protein (PMEL) Oligomerization and Disulfide Bond Configuration and Promotes Amyloid Formation.</title>
        <authorList>
            <person name="Ho T."/>
            <person name="Watt B."/>
            <person name="Spruce L.A."/>
            <person name="Seeholzer S.H."/>
            <person name="Marks M.S."/>
        </authorList>
    </citation>
    <scope>FUNCTION</scope>
    <scope>SUBUNIT</scope>
    <scope>DOMAIN KLD</scope>
    <scope>DISULFIDE BOND</scope>
    <scope>MUTAGENESIS OF CYS-60; CYS-130; CYS-138; CYS-301; CYS-475; CYS-516; CYS-525; CYS-533; CYS-541; CYS-550 AND CYS-566</scope>
</reference>
<reference key="29">
    <citation type="journal article" date="2017" name="Sci. Rep.">
        <title>Melanosomal formation of PMEL core amyloid is driven by aromatic residues.</title>
        <authorList>
            <person name="Hee J.S."/>
            <person name="Mitchell S.M."/>
            <person name="Liu X."/>
            <person name="Leonhardt R.M."/>
        </authorList>
    </citation>
    <scope>FUNCTION</scope>
    <scope>SUBUNIT</scope>
    <scope>DOMAIN CAF</scope>
    <scope>SITE</scope>
    <scope>GLYCOSYLATION</scope>
    <scope>MUTAGENESIS OF PHE-149; TYR-151; VAL-152; TRP-153; LYS-154; THR-155; TRP-156; GLY-157; GLN-158; TYR-159; TRP-160; GLN-161; VAL-162; GLY-165; LEU-170; ILE-172; THR-174; GLY-180; TYR-189; ARG-191; ARG-192; LEU-200; PHE-207; ILE-209; THR-210; ASP-211; VAL-213; PRO-214 AND PHE-215</scope>
</reference>
<reference key="30">
    <citation type="journal article" date="2019" name="Sci. Rep.">
        <title>Repeat domain-associated O-glycans govern PMEL fibrillar sheet architecture.</title>
        <authorList>
            <person name="Graham M."/>
            <person name="Tzika A.C."/>
            <person name="Mitchell S.M."/>
            <person name="Liu X."/>
            <person name="Leonhardt R.M."/>
        </authorList>
    </citation>
    <scope>FUNCTION</scope>
    <scope>SUBUNIT</scope>
    <scope>DOMAIN RPT</scope>
    <scope>GLYCOSYLATION</scope>
</reference>
<name>PMEL_HUMAN</name>
<dbReference type="EMBL" id="M77348">
    <property type="protein sequence ID" value="AAA60121.1"/>
    <property type="molecule type" value="mRNA"/>
</dbReference>
<dbReference type="EMBL" id="U01874">
    <property type="protein sequence ID" value="AAA18479.1"/>
    <property type="molecule type" value="mRNA"/>
</dbReference>
<dbReference type="EMBL" id="S73003">
    <property type="protein sequence ID" value="AAC60634.1"/>
    <property type="molecule type" value="mRNA"/>
</dbReference>
<dbReference type="EMBL" id="U31799">
    <property type="protein sequence ID" value="AAB00386.1"/>
    <property type="molecule type" value="Genomic_DNA"/>
</dbReference>
<dbReference type="EMBL" id="U31808">
    <property type="protein sequence ID" value="AAB00386.1"/>
    <property type="status" value="JOINED"/>
    <property type="molecule type" value="Genomic_DNA"/>
</dbReference>
<dbReference type="EMBL" id="U31807">
    <property type="protein sequence ID" value="AAB00386.1"/>
    <property type="status" value="JOINED"/>
    <property type="molecule type" value="Genomic_DNA"/>
</dbReference>
<dbReference type="EMBL" id="U31797">
    <property type="protein sequence ID" value="AAB00386.1"/>
    <property type="status" value="JOINED"/>
    <property type="molecule type" value="Genomic_DNA"/>
</dbReference>
<dbReference type="EMBL" id="U31798">
    <property type="protein sequence ID" value="AAB00386.1"/>
    <property type="status" value="JOINED"/>
    <property type="molecule type" value="Genomic_DNA"/>
</dbReference>
<dbReference type="EMBL" id="U20093">
    <property type="protein sequence ID" value="AAB19181.1"/>
    <property type="molecule type" value="Genomic_DNA"/>
</dbReference>
<dbReference type="EMBL" id="U19491">
    <property type="protein sequence ID" value="AAB19181.1"/>
    <property type="status" value="JOINED"/>
    <property type="molecule type" value="Genomic_DNA"/>
</dbReference>
<dbReference type="EMBL" id="M32295">
    <property type="protein sequence ID" value="AAA35930.1"/>
    <property type="status" value="ALT_SEQ"/>
    <property type="molecule type" value="mRNA"/>
</dbReference>
<dbReference type="EMBL" id="BT007202">
    <property type="protein sequence ID" value="AAP35866.1"/>
    <property type="molecule type" value="mRNA"/>
</dbReference>
<dbReference type="EMBL" id="AK092881">
    <property type="protein sequence ID" value="BAG52619.1"/>
    <property type="molecule type" value="mRNA"/>
</dbReference>
<dbReference type="EMBL" id="AK300150">
    <property type="protein sequence ID" value="BAH13223.1"/>
    <property type="molecule type" value="mRNA"/>
</dbReference>
<dbReference type="EMBL" id="AC025162">
    <property type="status" value="NOT_ANNOTATED_CDS"/>
    <property type="molecule type" value="Genomic_DNA"/>
</dbReference>
<dbReference type="EMBL" id="CH471054">
    <property type="protein sequence ID" value="EAW96853.1"/>
    <property type="molecule type" value="Genomic_DNA"/>
</dbReference>
<dbReference type="EMBL" id="BC001414">
    <property type="protein sequence ID" value="AAH01414.1"/>
    <property type="molecule type" value="mRNA"/>
</dbReference>
<dbReference type="CCDS" id="CCDS55833.1">
    <molecule id="P40967-3"/>
</dbReference>
<dbReference type="CCDS" id="CCDS55834.1">
    <molecule id="P40967-2"/>
</dbReference>
<dbReference type="CCDS" id="CCDS8897.1">
    <molecule id="P40967-1"/>
</dbReference>
<dbReference type="PIR" id="A41234">
    <property type="entry name" value="A41234"/>
</dbReference>
<dbReference type="PIR" id="I38400">
    <property type="entry name" value="I38400"/>
</dbReference>
<dbReference type="RefSeq" id="NP_001186982.1">
    <molecule id="P40967-3"/>
    <property type="nucleotide sequence ID" value="NM_001200053.1"/>
</dbReference>
<dbReference type="RefSeq" id="NP_001186983.1">
    <molecule id="P40967-2"/>
    <property type="nucleotide sequence ID" value="NM_001200054.1"/>
</dbReference>
<dbReference type="RefSeq" id="NP_001307050.1">
    <molecule id="P40967-5"/>
    <property type="nucleotide sequence ID" value="NM_001320121.1"/>
</dbReference>
<dbReference type="RefSeq" id="NP_001307051.1">
    <molecule id="P40967-4"/>
    <property type="nucleotide sequence ID" value="NM_001320122.1"/>
</dbReference>
<dbReference type="RefSeq" id="NP_001371290.1">
    <molecule id="P40967-1"/>
    <property type="nucleotide sequence ID" value="NM_001384361.1"/>
</dbReference>
<dbReference type="RefSeq" id="NP_008859.1">
    <molecule id="P40967-1"/>
    <property type="nucleotide sequence ID" value="NM_006928.5"/>
</dbReference>
<dbReference type="RefSeq" id="XP_006719632.1">
    <property type="nucleotide sequence ID" value="XM_006719569.1"/>
</dbReference>
<dbReference type="RefSeq" id="XP_011536987.1">
    <property type="nucleotide sequence ID" value="XM_011538685.1"/>
</dbReference>
<dbReference type="RefSeq" id="XP_054228897.1">
    <molecule id="P40967-2"/>
    <property type="nucleotide sequence ID" value="XM_054372922.1"/>
</dbReference>
<dbReference type="RefSeq" id="XP_054228898.1">
    <molecule id="P40967-1"/>
    <property type="nucleotide sequence ID" value="XM_054372923.1"/>
</dbReference>
<dbReference type="PDB" id="1TVB">
    <property type="method" value="X-ray"/>
    <property type="resolution" value="1.80 A"/>
    <property type="chains" value="C/F=209-217"/>
</dbReference>
<dbReference type="PDB" id="1TVH">
    <property type="method" value="X-ray"/>
    <property type="resolution" value="1.80 A"/>
    <property type="chains" value="C/F=209-217"/>
</dbReference>
<dbReference type="PDB" id="3CC5">
    <property type="method" value="X-ray"/>
    <property type="resolution" value="1.91 A"/>
    <property type="chains" value="C/F=25-33"/>
</dbReference>
<dbReference type="PDB" id="4IS6">
    <property type="method" value="X-ray"/>
    <property type="resolution" value="2.50 A"/>
    <property type="chains" value="C=44-59"/>
</dbReference>
<dbReference type="PDB" id="5EU3">
    <property type="method" value="X-ray"/>
    <property type="resolution" value="1.97 A"/>
    <property type="chains" value="C=280-288"/>
</dbReference>
<dbReference type="PDB" id="5EU4">
    <property type="method" value="X-ray"/>
    <property type="resolution" value="2.12 A"/>
    <property type="chains" value="C/F=280-288"/>
</dbReference>
<dbReference type="PDB" id="5EU5">
    <property type="method" value="X-ray"/>
    <property type="resolution" value="1.54 A"/>
    <property type="chains" value="C=280-288"/>
</dbReference>
<dbReference type="PDB" id="5EU6">
    <property type="method" value="X-ray"/>
    <property type="resolution" value="2.02 A"/>
    <property type="chains" value="C=280-287"/>
</dbReference>
<dbReference type="PDB" id="6VM7">
    <property type="method" value="X-ray"/>
    <property type="resolution" value="2.41 A"/>
    <property type="chains" value="C=209-217"/>
</dbReference>
<dbReference type="PDB" id="6VM8">
    <property type="method" value="X-ray"/>
    <property type="resolution" value="2.41 A"/>
    <property type="chains" value="C=209-217"/>
</dbReference>
<dbReference type="PDB" id="6VM9">
    <property type="method" value="X-ray"/>
    <property type="resolution" value="2.90 A"/>
    <property type="chains" value="C=209-217"/>
</dbReference>
<dbReference type="PDB" id="6VMA">
    <property type="method" value="X-ray"/>
    <property type="resolution" value="2.75 A"/>
    <property type="chains" value="C=209-217"/>
</dbReference>
<dbReference type="PDB" id="6VMC">
    <property type="method" value="X-ray"/>
    <property type="resolution" value="2.85 A"/>
    <property type="chains" value="C=209-217"/>
</dbReference>
<dbReference type="PDB" id="7PHR">
    <property type="method" value="EM"/>
    <property type="resolution" value="3.08 A"/>
    <property type="chains" value="P=280-288"/>
</dbReference>
<dbReference type="PDB" id="9JST">
    <property type="method" value="EM"/>
    <property type="resolution" value="1.79 A"/>
    <property type="chains" value="A/B/C/D/E/F/G/H=148-182"/>
</dbReference>
<dbReference type="PDB" id="9JSU">
    <property type="method" value="EM"/>
    <property type="resolution" value="1.79 A"/>
    <property type="chains" value="A/B/C/D/E/F/G/H=151-183"/>
</dbReference>
<dbReference type="PDB" id="9JSV">
    <property type="method" value="EM"/>
    <property type="resolution" value="1.79 A"/>
    <property type="chains" value="A/B/C/D/E/F/G/H=149-182"/>
</dbReference>
<dbReference type="PDB" id="9JSW">
    <property type="method" value="EM"/>
    <property type="resolution" value="1.94 A"/>
    <property type="chains" value="A/B/C/D/E/F/G/H=148-182"/>
</dbReference>
<dbReference type="PDB" id="9JSX">
    <property type="method" value="EM"/>
    <property type="resolution" value="1.79 A"/>
    <property type="chains" value="A/B/C/D/E/F/G/H=149-182"/>
</dbReference>
<dbReference type="PDBsum" id="1TVB"/>
<dbReference type="PDBsum" id="1TVH"/>
<dbReference type="PDBsum" id="3CC5"/>
<dbReference type="PDBsum" id="4IS6"/>
<dbReference type="PDBsum" id="5EU3"/>
<dbReference type="PDBsum" id="5EU4"/>
<dbReference type="PDBsum" id="5EU5"/>
<dbReference type="PDBsum" id="5EU6"/>
<dbReference type="PDBsum" id="6VM7"/>
<dbReference type="PDBsum" id="6VM8"/>
<dbReference type="PDBsum" id="6VM9"/>
<dbReference type="PDBsum" id="6VMA"/>
<dbReference type="PDBsum" id="6VMC"/>
<dbReference type="PDBsum" id="7PHR"/>
<dbReference type="PDBsum" id="9JST"/>
<dbReference type="PDBsum" id="9JSU"/>
<dbReference type="PDBsum" id="9JSV"/>
<dbReference type="PDBsum" id="9JSW"/>
<dbReference type="PDBsum" id="9JSX"/>
<dbReference type="EMDB" id="EMD-13427"/>
<dbReference type="EMDB" id="EMD-61782"/>
<dbReference type="EMDB" id="EMD-61783"/>
<dbReference type="EMDB" id="EMD-61784"/>
<dbReference type="EMDB" id="EMD-61785"/>
<dbReference type="EMDB" id="EMD-61786"/>
<dbReference type="SMR" id="P40967"/>
<dbReference type="BioGRID" id="112381">
    <property type="interactions" value="70"/>
</dbReference>
<dbReference type="DIP" id="DIP-48937N"/>
<dbReference type="FunCoup" id="P40967">
    <property type="interactions" value="224"/>
</dbReference>
<dbReference type="IntAct" id="P40967">
    <property type="interactions" value="61"/>
</dbReference>
<dbReference type="MINT" id="P40967"/>
<dbReference type="STRING" id="9606.ENSP00000402758"/>
<dbReference type="ChEMBL" id="CHEMBL3712988"/>
<dbReference type="DrugBank" id="DB15283">
    <property type="generic name" value="Tebentafusp"/>
</dbReference>
<dbReference type="DrugCentral" id="P40967"/>
<dbReference type="GlyCosmos" id="P40967">
    <property type="glycosylation" value="5 sites, No reported glycans"/>
</dbReference>
<dbReference type="GlyGen" id="P40967">
    <property type="glycosylation" value="7 sites"/>
</dbReference>
<dbReference type="iPTMnet" id="P40967"/>
<dbReference type="PhosphoSitePlus" id="P40967"/>
<dbReference type="BioMuta" id="PMEL"/>
<dbReference type="DMDM" id="2507099"/>
<dbReference type="jPOST" id="P40967"/>
<dbReference type="MassIVE" id="P40967"/>
<dbReference type="PaxDb" id="9606-ENSP00000402758"/>
<dbReference type="PeptideAtlas" id="P40967"/>
<dbReference type="ProteomicsDB" id="55393">
    <molecule id="P40967-1"/>
</dbReference>
<dbReference type="ProteomicsDB" id="55394">
    <molecule id="P40967-2"/>
</dbReference>
<dbReference type="ProteomicsDB" id="55395">
    <molecule id="P40967-3"/>
</dbReference>
<dbReference type="ProteomicsDB" id="55396">
    <molecule id="P40967-4"/>
</dbReference>
<dbReference type="ProteomicsDB" id="55397">
    <molecule id="P40967-5"/>
</dbReference>
<dbReference type="ABCD" id="P40967">
    <property type="antibodies" value="14 sequenced antibodies"/>
</dbReference>
<dbReference type="Antibodypedia" id="746">
    <property type="antibodies" value="1206 antibodies from 39 providers"/>
</dbReference>
<dbReference type="DNASU" id="6490"/>
<dbReference type="Ensembl" id="ENST00000449260.6">
    <molecule id="P40967-2"/>
    <property type="protein sequence ID" value="ENSP00000402758.2"/>
    <property type="gene ID" value="ENSG00000185664.15"/>
</dbReference>
<dbReference type="Ensembl" id="ENST00000548493.5">
    <molecule id="P40967-1"/>
    <property type="protein sequence ID" value="ENSP00000447374.1"/>
    <property type="gene ID" value="ENSG00000185664.15"/>
</dbReference>
<dbReference type="Ensembl" id="ENST00000548747.6">
    <molecule id="P40967-1"/>
    <property type="protein sequence ID" value="ENSP00000448828.1"/>
    <property type="gene ID" value="ENSG00000185664.15"/>
</dbReference>
<dbReference type="Ensembl" id="ENST00000550464.5">
    <molecule id="P40967-3"/>
    <property type="protein sequence ID" value="ENSP00000450036.1"/>
    <property type="gene ID" value="ENSG00000185664.15"/>
</dbReference>
<dbReference type="Ensembl" id="ENST00000552882.5">
    <molecule id="P40967-1"/>
    <property type="protein sequence ID" value="ENSP00000449690.1"/>
    <property type="gene ID" value="ENSG00000185664.15"/>
</dbReference>
<dbReference type="GeneID" id="6490"/>
<dbReference type="KEGG" id="hsa:6490"/>
<dbReference type="MANE-Select" id="ENST00000548747.6">
    <property type="protein sequence ID" value="ENSP00000448828.1"/>
    <property type="RefSeq nucleotide sequence ID" value="NM_001384361.1"/>
    <property type="RefSeq protein sequence ID" value="NP_001371290.1"/>
</dbReference>
<dbReference type="UCSC" id="uc001sip.4">
    <molecule id="P40967-1"/>
    <property type="organism name" value="human"/>
</dbReference>
<dbReference type="AGR" id="HGNC:10880"/>
<dbReference type="CTD" id="6490"/>
<dbReference type="DisGeNET" id="6490"/>
<dbReference type="GeneCards" id="PMEL"/>
<dbReference type="HGNC" id="HGNC:10880">
    <property type="gene designation" value="PMEL"/>
</dbReference>
<dbReference type="HPA" id="ENSG00000185664">
    <property type="expression patterns" value="Group enriched (cervix, endometrium, skin)"/>
</dbReference>
<dbReference type="MIM" id="155550">
    <property type="type" value="gene"/>
</dbReference>
<dbReference type="neXtProt" id="NX_P40967"/>
<dbReference type="OpenTargets" id="ENSG00000185664"/>
<dbReference type="PharmGKB" id="PA35781"/>
<dbReference type="VEuPathDB" id="HostDB:ENSG00000185664"/>
<dbReference type="eggNOG" id="ENOG502QV5K">
    <property type="taxonomic scope" value="Eukaryota"/>
</dbReference>
<dbReference type="GeneTree" id="ENSGT00950000183188"/>
<dbReference type="HOGENOM" id="CLU_017264_0_0_1"/>
<dbReference type="InParanoid" id="P40967"/>
<dbReference type="OMA" id="RDQDWLG"/>
<dbReference type="OrthoDB" id="9939762at2759"/>
<dbReference type="PAN-GO" id="P40967">
    <property type="GO annotations" value="3 GO annotations based on evolutionary models"/>
</dbReference>
<dbReference type="PhylomeDB" id="P40967"/>
<dbReference type="TreeFam" id="TF334865"/>
<dbReference type="PathwayCommons" id="P40967"/>
<dbReference type="Reactome" id="R-HSA-9824585">
    <property type="pathway name" value="Regulation of MITF-M-dependent genes involved in pigmentation"/>
</dbReference>
<dbReference type="SignaLink" id="P40967"/>
<dbReference type="SIGNOR" id="P40967"/>
<dbReference type="BioGRID-ORCS" id="6490">
    <property type="hits" value="21 hits in 1145 CRISPR screens"/>
</dbReference>
<dbReference type="ChiTaRS" id="PMEL">
    <property type="organism name" value="human"/>
</dbReference>
<dbReference type="EvolutionaryTrace" id="P40967"/>
<dbReference type="GeneWiki" id="PMEL_(gene)"/>
<dbReference type="GenomeRNAi" id="6490"/>
<dbReference type="Pharos" id="P40967">
    <property type="development level" value="Tclin"/>
</dbReference>
<dbReference type="PRO" id="PR:P40967"/>
<dbReference type="Proteomes" id="UP000005640">
    <property type="component" value="Chromosome 12"/>
</dbReference>
<dbReference type="RNAct" id="P40967">
    <property type="molecule type" value="protein"/>
</dbReference>
<dbReference type="Bgee" id="ENSG00000185664">
    <property type="expression patterns" value="Expressed in pigmented layer of retina and 116 other cell types or tissues"/>
</dbReference>
<dbReference type="ExpressionAtlas" id="P40967">
    <property type="expression patterns" value="baseline and differential"/>
</dbReference>
<dbReference type="GO" id="GO:0033106">
    <property type="term" value="C:cis-Golgi network membrane"/>
    <property type="evidence" value="ECO:0000314"/>
    <property type="project" value="UniProtKB"/>
</dbReference>
<dbReference type="GO" id="GO:0005783">
    <property type="term" value="C:endoplasmic reticulum"/>
    <property type="evidence" value="ECO:0000314"/>
    <property type="project" value="HPA"/>
</dbReference>
<dbReference type="GO" id="GO:0005789">
    <property type="term" value="C:endoplasmic reticulum membrane"/>
    <property type="evidence" value="ECO:0000314"/>
    <property type="project" value="UniProtKB"/>
</dbReference>
<dbReference type="GO" id="GO:0070062">
    <property type="term" value="C:extracellular exosome"/>
    <property type="evidence" value="ECO:0000314"/>
    <property type="project" value="UniProtKB"/>
</dbReference>
<dbReference type="GO" id="GO:0005794">
    <property type="term" value="C:Golgi apparatus"/>
    <property type="evidence" value="ECO:0000314"/>
    <property type="project" value="HPA"/>
</dbReference>
<dbReference type="GO" id="GO:0042470">
    <property type="term" value="C:melanosome"/>
    <property type="evidence" value="ECO:0000314"/>
    <property type="project" value="UniProtKB"/>
</dbReference>
<dbReference type="GO" id="GO:0033162">
    <property type="term" value="C:melanosome membrane"/>
    <property type="evidence" value="ECO:0000314"/>
    <property type="project" value="UniProtKB"/>
</dbReference>
<dbReference type="GO" id="GO:0032585">
    <property type="term" value="C:multivesicular body membrane"/>
    <property type="evidence" value="ECO:0000314"/>
    <property type="project" value="UniProtKB"/>
</dbReference>
<dbReference type="GO" id="GO:0097487">
    <property type="term" value="C:multivesicular body, internal vesicle"/>
    <property type="evidence" value="ECO:0000314"/>
    <property type="project" value="UniProtKB"/>
</dbReference>
<dbReference type="GO" id="GO:0005886">
    <property type="term" value="C:plasma membrane"/>
    <property type="evidence" value="ECO:0000318"/>
    <property type="project" value="GO_Central"/>
</dbReference>
<dbReference type="GO" id="GO:0042802">
    <property type="term" value="F:identical protein binding"/>
    <property type="evidence" value="ECO:0000353"/>
    <property type="project" value="IntAct"/>
</dbReference>
<dbReference type="GO" id="GO:0042438">
    <property type="term" value="P:melanin biosynthetic process"/>
    <property type="evidence" value="ECO:0007669"/>
    <property type="project" value="UniProtKB-KW"/>
</dbReference>
<dbReference type="GO" id="GO:0032438">
    <property type="term" value="P:melanosome organization"/>
    <property type="evidence" value="ECO:0000314"/>
    <property type="project" value="UniProtKB"/>
</dbReference>
<dbReference type="GO" id="GO:0048023">
    <property type="term" value="P:positive regulation of melanin biosynthetic process"/>
    <property type="evidence" value="ECO:0007669"/>
    <property type="project" value="Ensembl"/>
</dbReference>
<dbReference type="CDD" id="cd00146">
    <property type="entry name" value="PKD"/>
    <property type="match status" value="1"/>
</dbReference>
<dbReference type="FunFam" id="2.60.40.10:FF:000826">
    <property type="entry name" value="Melanocyte protein PMEL"/>
    <property type="match status" value="1"/>
</dbReference>
<dbReference type="Gene3D" id="2.60.40.10">
    <property type="entry name" value="Immunoglobulins"/>
    <property type="match status" value="1"/>
</dbReference>
<dbReference type="InterPro" id="IPR013783">
    <property type="entry name" value="Ig-like_fold"/>
</dbReference>
<dbReference type="InterPro" id="IPR045219">
    <property type="entry name" value="PKAT"/>
</dbReference>
<dbReference type="InterPro" id="IPR046846">
    <property type="entry name" value="PKAT_KLD"/>
</dbReference>
<dbReference type="InterPro" id="IPR022409">
    <property type="entry name" value="PKD/Chitinase_dom"/>
</dbReference>
<dbReference type="InterPro" id="IPR000601">
    <property type="entry name" value="PKD_dom"/>
</dbReference>
<dbReference type="InterPro" id="IPR035986">
    <property type="entry name" value="PKD_dom_sf"/>
</dbReference>
<dbReference type="PANTHER" id="PTHR11861:SF1">
    <property type="entry name" value="MELANOCYTE PROTEIN PMEL"/>
    <property type="match status" value="1"/>
</dbReference>
<dbReference type="PANTHER" id="PTHR11861">
    <property type="entry name" value="MELANOCYTE PROTEIN PMEL 17-RELATED"/>
    <property type="match status" value="1"/>
</dbReference>
<dbReference type="Pfam" id="PF20433">
    <property type="entry name" value="PKAT_KLD"/>
    <property type="match status" value="1"/>
</dbReference>
<dbReference type="Pfam" id="PF00801">
    <property type="entry name" value="PKD"/>
    <property type="match status" value="1"/>
</dbReference>
<dbReference type="SMART" id="SM00089">
    <property type="entry name" value="PKD"/>
    <property type="match status" value="1"/>
</dbReference>
<dbReference type="SUPFAM" id="SSF49299">
    <property type="entry name" value="PKD domain"/>
    <property type="match status" value="1"/>
</dbReference>
<dbReference type="PROSITE" id="PS50093">
    <property type="entry name" value="PKD"/>
    <property type="match status" value="1"/>
</dbReference>
<proteinExistence type="evidence at protein level"/>
<comment type="function">
    <text evidence="4 14 16 17 18 19">Forms physiological amyloids that play a central role in melanosome morphogenesis and pigmentation. The maturation of unpigmented premelanosomes from stage I to II is marked by assembly of processed amyloidogenic fragments into parallel fibrillar sheets, which elongate the vesicle into a striated ellipsoidal shape. In pigmented stage III and IV melanosomes, the amyloid matrix serves as a platform where eumelanin precursors accumulate at high local concentrations for pigment formation. May prevent pigmentation-associated toxicity by sequestering toxic reaction intermediates of eumelanin biosynthesis pathway.</text>
</comment>
<comment type="function">
    <text evidence="20 21">Represents a potent melanoma-specific antigen. Among melanoma non-mutated self-peptides, G9-154 (KTWGQYWQV), G9-209 (ITDQVPFSV) and G9-280 (YLEPGPVTA), appear to act as immunodominant common epitopes that stimulate anti-tumor immune response mediated by HLA-A-restricted cytotoxic T cells.</text>
</comment>
<comment type="subunit">
    <text evidence="8 14 16 17 18 19">Homodimer; disulfide-linked. Dimerization in the endoplasmic reticulum and early Golgi prevents premature fibril formation. The dimers are resolved to monomers in late- or post-Golgi compartments (PubMed:26694611). Heterooligomer; amyloid-type. Processed amyloidogenic fragments assemble into fibrils that further organize into beta-sheet quaternary amyloid structures (PubMed:28272432, PubMed:30988362). Interacts (via luminal C-terminal fragment) with CD63; this is important for sorting of the luminal fragment in tetraspanin rich microdomains in stage I melanosomes to prevent premature lysosomal degradation (PubMed:21962903). Interacts with APOE; this allows the loading of the luminal fragment on ILVs to induce fibril nucleation (PubMed:26387950). Interacts with MLANA (PubMed:15695812).</text>
</comment>
<comment type="interaction">
    <interactant intactId="EBI-14022409">
        <id>P40967</id>
    </interactant>
    <interactant intactId="EBI-14022409">
        <id>P40967</id>
        <label>PMEL</label>
    </interactant>
    <organismsDiffer>false</organismsDiffer>
    <experiments>4</experiments>
</comment>
<comment type="interaction">
    <interactant intactId="EBI-15894236">
        <id>P40967-2</id>
    </interactant>
    <interactant intactId="EBI-15894236">
        <id>P40967-2</id>
        <label>PMEL</label>
    </interactant>
    <organismsDiffer>false</organismsDiffer>
    <experiments>4</experiments>
</comment>
<comment type="subcellular location">
    <subcellularLocation>
        <location evidence="7 8 13">Endoplasmic reticulum membrane</location>
        <topology evidence="1">Single-pass type I membrane protein</topology>
    </subcellularLocation>
    <subcellularLocation>
        <location evidence="7">Golgi apparatus</location>
        <location evidence="7">cis-Golgi network membrane</location>
        <topology evidence="1">Single-pass type I membrane protein</topology>
    </subcellularLocation>
    <subcellularLocation>
        <location evidence="4 12 13 14 16">Endosome</location>
        <location evidence="4 12 13 14 16">Multivesicular body</location>
    </subcellularLocation>
    <subcellularLocation>
        <location evidence="4 5 7 8 11 12 15">Melanosome</location>
    </subcellularLocation>
    <subcellularLocation>
        <location evidence="16">Extracellular vesicle</location>
    </subcellularLocation>
    <subcellularLocation>
        <location evidence="22">Secreted</location>
    </subcellularLocation>
    <text evidence="4 5 7 10 11 14 15 16 19">Identified by mass spectrometry in melanosome fractions from stage I to stage IV (PubMed:17081065). Localizes predominantly to intralumenal vesicles (ILVs) within multivesicular bodies. Associates with ILVs found within the lumen of premelanosomes and melanosomes and particularly in compartments that serve as precursors to the striated stage II premelanosomes (PubMed:11694580, PubMed:12643545). Sorted to stage I melanosomes following its processing in the ER and cis-Golgi (PubMed:15096515). Transiently expressed at the cell surface before targeting to early melanosomes (PubMed:16760433, PubMed:30988362). Colocalizes with BACE2 in stage I and II melanosomes (PubMed:23754390). Colocalizes with CD63 and APOE at exosomes and in intraluminal vesicles within multivesicular endosomes (PubMed:21962903, PubMed:26387950).</text>
</comment>
<comment type="alternative products">
    <event type="alternative splicing"/>
    <isoform>
        <id>P40967-1</id>
        <name>1</name>
        <name>Intermediate form</name>
        <name>Pmel17-i</name>
        <sequence type="displayed"/>
    </isoform>
    <isoform>
        <id>P40967-2</id>
        <name>2</name>
        <name>Long form</name>
        <name>Pmel17-l</name>
        <sequence type="described" ref="VSP_038268"/>
    </isoform>
    <isoform>
        <id>P40967-3</id>
        <name>3</name>
        <sequence type="described" ref="VSP_038266"/>
    </isoform>
    <isoform>
        <id>P40967-4</id>
        <name>4</name>
        <name>Short form</name>
        <name>Pmel17-ls</name>
        <sequence type="described" ref="VSP_038267"/>
    </isoform>
    <isoform>
        <id>P40967-5</id>
        <name>5</name>
        <name>Short form</name>
        <name>Pmel17-is</name>
        <sequence type="described" ref="VSP_038267 VSP_038268"/>
    </isoform>
</comment>
<comment type="tissue specificity">
    <text evidence="21">Normally expressed at low levels in quiescent adult melanocytes but overexpressed by proliferating neonatal melanocytes and during tumor growth. Overexpressed in melanomas. Some expression was found in dysplastic nevi.</text>
</comment>
<comment type="domain">
    <text evidence="18">The core amyloid fragment (CAF) represents the amyloidogenic unit of melanosomal fibrils. It is predicted to form a beta-solenoid structure comprising four coil right-handed beta strands with Tyr-151 and Trp-160 residues pi-stacking against each other to confer stability.</text>
</comment>
<comment type="domain">
    <text evidence="9 19">The highly O-glycosylated repeat (RPT) domain drives the generation of the fibrillar amyloid sheet structures within melanosomes. The O-glycosylation sites rather than its primary amino acid sequence are conserved across species.</text>
</comment>
<comment type="domain">
    <text evidence="17">The Kringle-like domain (KLD) contains six highly conserved cysteine residues that are critical for dimer formation.</text>
</comment>
<comment type="PTM">
    <text evidence="4 7 10 12 18 19">N- and O-glycosylated. A small amount of P1/P100 (major form) undergoes glycosylation in ER and Golgi compartments to yield P2/P120 (minor form). The mature P2 form leaves the trans-Golgi network and is mainly targeted to stage I melanosomes via the plasma membrane and clathrin-mediated endocytosis. Stage II melanosomes harbor only Golgi-modified fragments that are derived from M-alpha and that bear sialylated O-linked oligosaccharides. O-glycosylation of the RPT region is a conserved feature likely involved in amyloid sheet separation via electrostatic repulsion.</text>
</comment>
<comment type="PTM">
    <text evidence="4 6 7 8 12 13 15">Undergoes multiple proteolytic processing. In a post-Golgi prelysosomal compartment, P2 is cleaved by a furin-like proprotein convertase (PC) into two disulfide-linked subunits: a large lumenal subunit, M-alpha/ME20-S, and an integral membrane subunit, M-beta. Despite cleavage, only a small fraction of M-alpha is secreted, as most M-alpha and M-beta remain associated with each other intracellularly via a disulfide bond (PubMed:11694580, PubMed:12732614, PubMed:15096515, PubMed:15695812, PubMed:17991747). Once targeted to stage I melanosomes, beta-secretase BACE2 cleaves the M-beta fragment to release the amyloidogenic luminal fragment containing M-alpha and a small portion of M-beta N-terminus (PubMed:23754390). M-alpha is further cleaved by metalloproteinases, likely ADAM10 or ADAM17, and still unknown proteases to yield subfragments that ultimately assemble into amyloid fibrils (PubMed:19047044). The C-terminal fragment of M-beta is processed by the gamma-secretase complex to release a short intracytoplasmic domain (PubMed:19047044).</text>
</comment>
<comment type="similarity">
    <text evidence="25">Belongs to the PMEL/NMB family.</text>
</comment>
<comment type="sequence caution" evidence="25">
    <conflict type="erroneous initiation">
        <sequence resource="EMBL-CDS" id="AAA35930"/>
    </conflict>
    <text>Truncated N-terminus.</text>
</comment>
<comment type="sequence caution" evidence="25">
    <conflict type="frameshift">
        <sequence resource="EMBL-CDS" id="AAA35930"/>
    </conflict>
</comment>
<protein>
    <recommendedName>
        <fullName>Melanocyte protein PMEL</fullName>
    </recommendedName>
    <alternativeName>
        <fullName>ME20-M</fullName>
        <shortName>ME20M</shortName>
    </alternativeName>
    <alternativeName>
        <fullName>Melanocyte protein Pmel 17</fullName>
    </alternativeName>
    <alternativeName>
        <fullName>Melanocytes lineage-specific antigen GP100</fullName>
    </alternativeName>
    <alternativeName>
        <fullName>Melanoma-associated ME20 antigen</fullName>
    </alternativeName>
    <alternativeName>
        <fullName>P1</fullName>
    </alternativeName>
    <alternativeName>
        <fullName>P100</fullName>
    </alternativeName>
    <alternativeName>
        <fullName>Premelanosome protein</fullName>
    </alternativeName>
    <alternativeName>
        <fullName>Silver locus protein homolog</fullName>
    </alternativeName>
    <component>
        <recommendedName>
            <fullName>M-alpha</fullName>
        </recommendedName>
        <alternativeName>
            <fullName>95 kDa melanocyte-specific secreted glycoprotein</fullName>
        </alternativeName>
        <alternativeName>
            <fullName>P26</fullName>
        </alternativeName>
        <alternativeName>
            <fullName>Secreted melanoma-associated ME20 antigen</fullName>
            <shortName>ME20-S</shortName>
            <shortName>ME20S</shortName>
        </alternativeName>
    </component>
    <component>
        <recommendedName>
            <fullName>M-beta</fullName>
        </recommendedName>
    </component>
</protein>